<name>RECR_STRT2</name>
<dbReference type="EMBL" id="CP000023">
    <property type="protein sequence ID" value="AAV60320.1"/>
    <property type="molecule type" value="Genomic_DNA"/>
</dbReference>
<dbReference type="RefSeq" id="WP_011225694.1">
    <property type="nucleotide sequence ID" value="NC_006448.1"/>
</dbReference>
<dbReference type="SMR" id="Q5M580"/>
<dbReference type="STRING" id="264199.stu0614"/>
<dbReference type="GeneID" id="66898520"/>
<dbReference type="KEGG" id="stl:stu0614"/>
<dbReference type="eggNOG" id="COG0353">
    <property type="taxonomic scope" value="Bacteria"/>
</dbReference>
<dbReference type="HOGENOM" id="CLU_060739_1_0_9"/>
<dbReference type="Proteomes" id="UP000001170">
    <property type="component" value="Chromosome"/>
</dbReference>
<dbReference type="GO" id="GO:0003677">
    <property type="term" value="F:DNA binding"/>
    <property type="evidence" value="ECO:0007669"/>
    <property type="project" value="UniProtKB-UniRule"/>
</dbReference>
<dbReference type="GO" id="GO:0008270">
    <property type="term" value="F:zinc ion binding"/>
    <property type="evidence" value="ECO:0007669"/>
    <property type="project" value="UniProtKB-KW"/>
</dbReference>
<dbReference type="GO" id="GO:0006310">
    <property type="term" value="P:DNA recombination"/>
    <property type="evidence" value="ECO:0007669"/>
    <property type="project" value="UniProtKB-UniRule"/>
</dbReference>
<dbReference type="GO" id="GO:0006281">
    <property type="term" value="P:DNA repair"/>
    <property type="evidence" value="ECO:0007669"/>
    <property type="project" value="UniProtKB-UniRule"/>
</dbReference>
<dbReference type="CDD" id="cd01025">
    <property type="entry name" value="TOPRIM_recR"/>
    <property type="match status" value="1"/>
</dbReference>
<dbReference type="Gene3D" id="3.30.60.80">
    <property type="match status" value="1"/>
</dbReference>
<dbReference type="Gene3D" id="3.40.1360.10">
    <property type="match status" value="1"/>
</dbReference>
<dbReference type="Gene3D" id="6.10.250.240">
    <property type="match status" value="1"/>
</dbReference>
<dbReference type="Gene3D" id="1.10.8.420">
    <property type="entry name" value="RecR Domain 1"/>
    <property type="match status" value="1"/>
</dbReference>
<dbReference type="HAMAP" id="MF_00017">
    <property type="entry name" value="RecR"/>
    <property type="match status" value="1"/>
</dbReference>
<dbReference type="InterPro" id="IPR000093">
    <property type="entry name" value="DNA_Rcmb_RecR"/>
</dbReference>
<dbReference type="InterPro" id="IPR023627">
    <property type="entry name" value="Rcmb_RecR"/>
</dbReference>
<dbReference type="InterPro" id="IPR015967">
    <property type="entry name" value="Rcmb_RecR_Znf"/>
</dbReference>
<dbReference type="InterPro" id="IPR006171">
    <property type="entry name" value="TOPRIM_dom"/>
</dbReference>
<dbReference type="InterPro" id="IPR034137">
    <property type="entry name" value="TOPRIM_RecR"/>
</dbReference>
<dbReference type="NCBIfam" id="TIGR00615">
    <property type="entry name" value="recR"/>
    <property type="match status" value="1"/>
</dbReference>
<dbReference type="PANTHER" id="PTHR30446">
    <property type="entry name" value="RECOMBINATION PROTEIN RECR"/>
    <property type="match status" value="1"/>
</dbReference>
<dbReference type="PANTHER" id="PTHR30446:SF0">
    <property type="entry name" value="RECOMBINATION PROTEIN RECR"/>
    <property type="match status" value="1"/>
</dbReference>
<dbReference type="Pfam" id="PF21175">
    <property type="entry name" value="RecR_C"/>
    <property type="match status" value="1"/>
</dbReference>
<dbReference type="Pfam" id="PF21176">
    <property type="entry name" value="RecR_HhH"/>
    <property type="match status" value="1"/>
</dbReference>
<dbReference type="Pfam" id="PF13662">
    <property type="entry name" value="Toprim_4"/>
    <property type="match status" value="1"/>
</dbReference>
<dbReference type="SMART" id="SM00493">
    <property type="entry name" value="TOPRIM"/>
    <property type="match status" value="1"/>
</dbReference>
<dbReference type="SUPFAM" id="SSF111304">
    <property type="entry name" value="Recombination protein RecR"/>
    <property type="match status" value="1"/>
</dbReference>
<dbReference type="PROSITE" id="PS01300">
    <property type="entry name" value="RECR"/>
    <property type="match status" value="1"/>
</dbReference>
<dbReference type="PROSITE" id="PS50880">
    <property type="entry name" value="TOPRIM"/>
    <property type="match status" value="1"/>
</dbReference>
<comment type="function">
    <text evidence="1">May play a role in DNA repair. It seems to be involved in an RecBC-independent recombinational process of DNA repair. It may act with RecF and RecO.</text>
</comment>
<comment type="similarity">
    <text evidence="1">Belongs to the RecR family.</text>
</comment>
<feature type="chain" id="PRO_0000190405" description="Recombination protein RecR">
    <location>
        <begin position="1"/>
        <end position="198"/>
    </location>
</feature>
<feature type="domain" description="Toprim" evidence="1">
    <location>
        <begin position="80"/>
        <end position="175"/>
    </location>
</feature>
<feature type="zinc finger region" description="C4-type" evidence="1">
    <location>
        <begin position="57"/>
        <end position="72"/>
    </location>
</feature>
<organism>
    <name type="scientific">Streptococcus thermophilus (strain ATCC BAA-250 / LMG 18311)</name>
    <dbReference type="NCBI Taxonomy" id="264199"/>
    <lineage>
        <taxon>Bacteria</taxon>
        <taxon>Bacillati</taxon>
        <taxon>Bacillota</taxon>
        <taxon>Bacilli</taxon>
        <taxon>Lactobacillales</taxon>
        <taxon>Streptococcaceae</taxon>
        <taxon>Streptococcus</taxon>
    </lineage>
</organism>
<accession>Q5M580</accession>
<gene>
    <name evidence="1" type="primary">recR</name>
    <name type="ordered locus">stu0614</name>
</gene>
<reference key="1">
    <citation type="journal article" date="2004" name="Nat. Biotechnol.">
        <title>Complete sequence and comparative genome analysis of the dairy bacterium Streptococcus thermophilus.</title>
        <authorList>
            <person name="Bolotin A."/>
            <person name="Quinquis B."/>
            <person name="Renault P."/>
            <person name="Sorokin A."/>
            <person name="Ehrlich S.D."/>
            <person name="Kulakauskas S."/>
            <person name="Lapidus A."/>
            <person name="Goltsman E."/>
            <person name="Mazur M."/>
            <person name="Pusch G.D."/>
            <person name="Fonstein M."/>
            <person name="Overbeek R."/>
            <person name="Kyprides N."/>
            <person name="Purnelle B."/>
            <person name="Prozzi D."/>
            <person name="Ngui K."/>
            <person name="Masuy D."/>
            <person name="Hancy F."/>
            <person name="Burteau S."/>
            <person name="Boutry M."/>
            <person name="Delcour J."/>
            <person name="Goffeau A."/>
            <person name="Hols P."/>
        </authorList>
    </citation>
    <scope>NUCLEOTIDE SEQUENCE [LARGE SCALE GENOMIC DNA]</scope>
    <source>
        <strain>ATCC BAA-250 / LMG 18311</strain>
    </source>
</reference>
<proteinExistence type="inferred from homology"/>
<sequence length="198" mass="21768">MLYPTPIAKLIDSFSKLPGIGAKTATRLAFYTISMSDEDVNDFAKNLLAAKRELTYCSVCGRLTDDDPCIICTDETRDRTKILVVEDSKDVSAMEKIQEYRGLYHVLQGLISPMNGVGPDDINLKSLITRLMDSEVDEVIIATNATADGEATSMYISRVLKPAGIKVTRLARGLAVGSDIEYADEVTLLRAIENRTEL</sequence>
<keyword id="KW-0227">DNA damage</keyword>
<keyword id="KW-0233">DNA recombination</keyword>
<keyword id="KW-0234">DNA repair</keyword>
<keyword id="KW-0479">Metal-binding</keyword>
<keyword id="KW-1185">Reference proteome</keyword>
<keyword id="KW-0862">Zinc</keyword>
<keyword id="KW-0863">Zinc-finger</keyword>
<protein>
    <recommendedName>
        <fullName evidence="1">Recombination protein RecR</fullName>
    </recommendedName>
</protein>
<evidence type="ECO:0000255" key="1">
    <source>
        <dbReference type="HAMAP-Rule" id="MF_00017"/>
    </source>
</evidence>